<keyword id="KW-1185">Reference proteome</keyword>
<keyword id="KW-0687">Ribonucleoprotein</keyword>
<keyword id="KW-0689">Ribosomal protein</keyword>
<keyword id="KW-0694">RNA-binding</keyword>
<keyword id="KW-0699">rRNA-binding</keyword>
<sequence length="201" mass="23387">MARYTGPATRKSRRLRVDLVGGDMAFERRPYPPGQAGRARIKESEYLLQLQEKQKARFIYGVMEKQFRRYYAEANRRPGKTGENLVVMLESRLDNVVYRAGLARTRRQARQLVSHGHFVVNGKAVDVPSFRVSQYDIIDVREKSQKMNWFEEAQDNLVDAIVPAWLQVVPSTLRILVHQLPERAQIDIPLQEQLIVEFYSK</sequence>
<proteinExistence type="inferred from homology"/>
<comment type="function">
    <text evidence="1">One of the primary rRNA binding proteins, it binds directly to 16S rRNA where it nucleates assembly of the body of the 30S subunit.</text>
</comment>
<comment type="function">
    <text evidence="1">With S5 and S12 plays an important role in translational accuracy.</text>
</comment>
<comment type="subunit">
    <text evidence="1">Part of the 30S ribosomal subunit. Contacts protein S5. The interaction surface between S4 and S5 is involved in control of translational fidelity.</text>
</comment>
<comment type="similarity">
    <text evidence="1">Belongs to the universal ribosomal protein uS4 family.</text>
</comment>
<reference key="1">
    <citation type="journal article" date="2003" name="Genome Res.">
        <title>Comparative complete genome sequence analysis of the amino acid replacements responsible for the thermostability of Corynebacterium efficiens.</title>
        <authorList>
            <person name="Nishio Y."/>
            <person name="Nakamura Y."/>
            <person name="Kawarabayasi Y."/>
            <person name="Usuda Y."/>
            <person name="Kimura E."/>
            <person name="Sugimoto S."/>
            <person name="Matsui K."/>
            <person name="Yamagishi A."/>
            <person name="Kikuchi H."/>
            <person name="Ikeo K."/>
            <person name="Gojobori T."/>
        </authorList>
    </citation>
    <scope>NUCLEOTIDE SEQUENCE [LARGE SCALE GENOMIC DNA]</scope>
    <source>
        <strain>DSM 44549 / YS-314 / AJ 12310 / JCM 11189 / NBRC 100395</strain>
    </source>
</reference>
<protein>
    <recommendedName>
        <fullName evidence="1">Small ribosomal subunit protein uS4</fullName>
    </recommendedName>
    <alternativeName>
        <fullName evidence="2">30S ribosomal protein S4</fullName>
    </alternativeName>
</protein>
<gene>
    <name evidence="1" type="primary">rpsD</name>
    <name type="ordered locus">CE0571</name>
</gene>
<name>RS4_COREF</name>
<organism>
    <name type="scientific">Corynebacterium efficiens (strain DSM 44549 / YS-314 / AJ 12310 / JCM 11189 / NBRC 100395)</name>
    <dbReference type="NCBI Taxonomy" id="196164"/>
    <lineage>
        <taxon>Bacteria</taxon>
        <taxon>Bacillati</taxon>
        <taxon>Actinomycetota</taxon>
        <taxon>Actinomycetes</taxon>
        <taxon>Mycobacteriales</taxon>
        <taxon>Corynebacteriaceae</taxon>
        <taxon>Corynebacterium</taxon>
    </lineage>
</organism>
<dbReference type="EMBL" id="BA000035">
    <property type="protein sequence ID" value="BAC17381.1"/>
    <property type="molecule type" value="Genomic_DNA"/>
</dbReference>
<dbReference type="RefSeq" id="WP_011075048.1">
    <property type="nucleotide sequence ID" value="NC_004369.1"/>
</dbReference>
<dbReference type="SMR" id="Q8FS34"/>
<dbReference type="STRING" id="196164.gene:10740973"/>
<dbReference type="KEGG" id="cef:CE0571"/>
<dbReference type="eggNOG" id="COG0522">
    <property type="taxonomic scope" value="Bacteria"/>
</dbReference>
<dbReference type="HOGENOM" id="CLU_092403_0_2_11"/>
<dbReference type="OrthoDB" id="9803672at2"/>
<dbReference type="Proteomes" id="UP000001409">
    <property type="component" value="Chromosome"/>
</dbReference>
<dbReference type="GO" id="GO:0015935">
    <property type="term" value="C:small ribosomal subunit"/>
    <property type="evidence" value="ECO:0007669"/>
    <property type="project" value="InterPro"/>
</dbReference>
<dbReference type="GO" id="GO:0019843">
    <property type="term" value="F:rRNA binding"/>
    <property type="evidence" value="ECO:0007669"/>
    <property type="project" value="UniProtKB-UniRule"/>
</dbReference>
<dbReference type="GO" id="GO:0003735">
    <property type="term" value="F:structural constituent of ribosome"/>
    <property type="evidence" value="ECO:0007669"/>
    <property type="project" value="InterPro"/>
</dbReference>
<dbReference type="GO" id="GO:0042274">
    <property type="term" value="P:ribosomal small subunit biogenesis"/>
    <property type="evidence" value="ECO:0007669"/>
    <property type="project" value="TreeGrafter"/>
</dbReference>
<dbReference type="GO" id="GO:0006412">
    <property type="term" value="P:translation"/>
    <property type="evidence" value="ECO:0007669"/>
    <property type="project" value="UniProtKB-UniRule"/>
</dbReference>
<dbReference type="CDD" id="cd00165">
    <property type="entry name" value="S4"/>
    <property type="match status" value="1"/>
</dbReference>
<dbReference type="FunFam" id="3.10.290.10:FF:000001">
    <property type="entry name" value="30S ribosomal protein S4"/>
    <property type="match status" value="1"/>
</dbReference>
<dbReference type="Gene3D" id="1.10.1050.10">
    <property type="entry name" value="Ribosomal Protein S4 Delta 41, Chain A, domain 1"/>
    <property type="match status" value="1"/>
</dbReference>
<dbReference type="Gene3D" id="3.10.290.10">
    <property type="entry name" value="RNA-binding S4 domain"/>
    <property type="match status" value="1"/>
</dbReference>
<dbReference type="HAMAP" id="MF_01306_B">
    <property type="entry name" value="Ribosomal_uS4_B"/>
    <property type="match status" value="1"/>
</dbReference>
<dbReference type="InterPro" id="IPR022801">
    <property type="entry name" value="Ribosomal_uS4"/>
</dbReference>
<dbReference type="InterPro" id="IPR005709">
    <property type="entry name" value="Ribosomal_uS4_bac-type"/>
</dbReference>
<dbReference type="InterPro" id="IPR018079">
    <property type="entry name" value="Ribosomal_uS4_CS"/>
</dbReference>
<dbReference type="InterPro" id="IPR001912">
    <property type="entry name" value="Ribosomal_uS4_N"/>
</dbReference>
<dbReference type="InterPro" id="IPR002942">
    <property type="entry name" value="S4_RNA-bd"/>
</dbReference>
<dbReference type="InterPro" id="IPR036986">
    <property type="entry name" value="S4_RNA-bd_sf"/>
</dbReference>
<dbReference type="NCBIfam" id="NF003717">
    <property type="entry name" value="PRK05327.1"/>
    <property type="match status" value="1"/>
</dbReference>
<dbReference type="NCBIfam" id="TIGR01017">
    <property type="entry name" value="rpsD_bact"/>
    <property type="match status" value="1"/>
</dbReference>
<dbReference type="PANTHER" id="PTHR11831">
    <property type="entry name" value="30S 40S RIBOSOMAL PROTEIN"/>
    <property type="match status" value="1"/>
</dbReference>
<dbReference type="PANTHER" id="PTHR11831:SF4">
    <property type="entry name" value="SMALL RIBOSOMAL SUBUNIT PROTEIN US4M"/>
    <property type="match status" value="1"/>
</dbReference>
<dbReference type="Pfam" id="PF00163">
    <property type="entry name" value="Ribosomal_S4"/>
    <property type="match status" value="1"/>
</dbReference>
<dbReference type="Pfam" id="PF01479">
    <property type="entry name" value="S4"/>
    <property type="match status" value="1"/>
</dbReference>
<dbReference type="SMART" id="SM01390">
    <property type="entry name" value="Ribosomal_S4"/>
    <property type="match status" value="1"/>
</dbReference>
<dbReference type="SMART" id="SM00363">
    <property type="entry name" value="S4"/>
    <property type="match status" value="1"/>
</dbReference>
<dbReference type="SUPFAM" id="SSF55174">
    <property type="entry name" value="Alpha-L RNA-binding motif"/>
    <property type="match status" value="1"/>
</dbReference>
<dbReference type="PROSITE" id="PS00632">
    <property type="entry name" value="RIBOSOMAL_S4"/>
    <property type="match status" value="1"/>
</dbReference>
<dbReference type="PROSITE" id="PS50889">
    <property type="entry name" value="S4"/>
    <property type="match status" value="1"/>
</dbReference>
<accession>Q8FS34</accession>
<evidence type="ECO:0000255" key="1">
    <source>
        <dbReference type="HAMAP-Rule" id="MF_01306"/>
    </source>
</evidence>
<evidence type="ECO:0000305" key="2"/>
<feature type="chain" id="PRO_0000132374" description="Small ribosomal subunit protein uS4">
    <location>
        <begin position="1"/>
        <end position="201"/>
    </location>
</feature>
<feature type="domain" description="S4 RNA-binding" evidence="1">
    <location>
        <begin position="91"/>
        <end position="151"/>
    </location>
</feature>